<gene>
    <name evidence="1" type="primary">pncB</name>
    <name type="ordered locus">Mbur_0321</name>
</gene>
<name>PNCB_METBU</name>
<protein>
    <recommendedName>
        <fullName evidence="1">Nicotinate phosphoribosyltransferase</fullName>
        <shortName evidence="1">NAPRTase</shortName>
        <ecNumber evidence="1">6.3.4.21</ecNumber>
    </recommendedName>
</protein>
<dbReference type="EC" id="6.3.4.21" evidence="1"/>
<dbReference type="EMBL" id="CP000300">
    <property type="protein sequence ID" value="ABE51321.1"/>
    <property type="molecule type" value="Genomic_DNA"/>
</dbReference>
<dbReference type="RefSeq" id="WP_011498483.1">
    <property type="nucleotide sequence ID" value="NC_007955.1"/>
</dbReference>
<dbReference type="SMR" id="Q12Z05"/>
<dbReference type="STRING" id="259564.Mbur_0321"/>
<dbReference type="GeneID" id="3997477"/>
<dbReference type="KEGG" id="mbu:Mbur_0321"/>
<dbReference type="HOGENOM" id="CLU_030991_1_0_2"/>
<dbReference type="OrthoDB" id="131109at2157"/>
<dbReference type="UniPathway" id="UPA00253">
    <property type="reaction ID" value="UER00457"/>
</dbReference>
<dbReference type="Proteomes" id="UP000001979">
    <property type="component" value="Chromosome"/>
</dbReference>
<dbReference type="GO" id="GO:0005829">
    <property type="term" value="C:cytosol"/>
    <property type="evidence" value="ECO:0007669"/>
    <property type="project" value="TreeGrafter"/>
</dbReference>
<dbReference type="GO" id="GO:0004516">
    <property type="term" value="F:nicotinate phosphoribosyltransferase activity"/>
    <property type="evidence" value="ECO:0007669"/>
    <property type="project" value="UniProtKB-UniRule"/>
</dbReference>
<dbReference type="GO" id="GO:0034355">
    <property type="term" value="P:NAD biosynthetic process via the salvage pathway"/>
    <property type="evidence" value="ECO:0007669"/>
    <property type="project" value="TreeGrafter"/>
</dbReference>
<dbReference type="Gene3D" id="3.20.140.10">
    <property type="entry name" value="nicotinate phosphoribosyltransferase"/>
    <property type="match status" value="1"/>
</dbReference>
<dbReference type="HAMAP" id="MF_00570">
    <property type="entry name" value="NAPRTase"/>
    <property type="match status" value="1"/>
</dbReference>
<dbReference type="InterPro" id="IPR041525">
    <property type="entry name" value="N/Namide_PRibTrfase"/>
</dbReference>
<dbReference type="InterPro" id="IPR040727">
    <property type="entry name" value="NAPRTase_N"/>
</dbReference>
<dbReference type="InterPro" id="IPR006406">
    <property type="entry name" value="Nic_PRibTrfase"/>
</dbReference>
<dbReference type="InterPro" id="IPR007229">
    <property type="entry name" value="Nic_PRibTrfase-Fam"/>
</dbReference>
<dbReference type="InterPro" id="IPR036068">
    <property type="entry name" value="Nicotinate_pribotase-like_C"/>
</dbReference>
<dbReference type="NCBIfam" id="TIGR01514">
    <property type="entry name" value="NAPRTase"/>
    <property type="match status" value="1"/>
</dbReference>
<dbReference type="NCBIfam" id="NF003704">
    <property type="entry name" value="PRK05321.1"/>
    <property type="match status" value="1"/>
</dbReference>
<dbReference type="PANTHER" id="PTHR11098">
    <property type="entry name" value="NICOTINATE PHOSPHORIBOSYLTRANSFERASE"/>
    <property type="match status" value="1"/>
</dbReference>
<dbReference type="PANTHER" id="PTHR11098:SF1">
    <property type="entry name" value="NICOTINATE PHOSPHORIBOSYLTRANSFERASE"/>
    <property type="match status" value="1"/>
</dbReference>
<dbReference type="Pfam" id="PF04095">
    <property type="entry name" value="NAPRTase"/>
    <property type="match status" value="1"/>
</dbReference>
<dbReference type="Pfam" id="PF17767">
    <property type="entry name" value="NAPRTase_N"/>
    <property type="match status" value="1"/>
</dbReference>
<dbReference type="PIRSF" id="PIRSF000484">
    <property type="entry name" value="NAPRT"/>
    <property type="match status" value="1"/>
</dbReference>
<dbReference type="SUPFAM" id="SSF51690">
    <property type="entry name" value="Nicotinate/Quinolinate PRTase C-terminal domain-like"/>
    <property type="match status" value="1"/>
</dbReference>
<dbReference type="SUPFAM" id="SSF54675">
    <property type="entry name" value="Nicotinate/Quinolinate PRTase N-terminal domain-like"/>
    <property type="match status" value="1"/>
</dbReference>
<keyword id="KW-0436">Ligase</keyword>
<keyword id="KW-0597">Phosphoprotein</keyword>
<keyword id="KW-0662">Pyridine nucleotide biosynthesis</keyword>
<reference key="1">
    <citation type="journal article" date="2009" name="ISME J.">
        <title>The genome sequence of the psychrophilic archaeon, Methanococcoides burtonii: the role of genome evolution in cold adaptation.</title>
        <authorList>
            <person name="Allen M.A."/>
            <person name="Lauro F.M."/>
            <person name="Williams T.J."/>
            <person name="Burg D."/>
            <person name="Siddiqui K.S."/>
            <person name="De Francisci D."/>
            <person name="Chong K.W."/>
            <person name="Pilak O."/>
            <person name="Chew H.H."/>
            <person name="De Maere M.Z."/>
            <person name="Ting L."/>
            <person name="Katrib M."/>
            <person name="Ng C."/>
            <person name="Sowers K.R."/>
            <person name="Galperin M.Y."/>
            <person name="Anderson I.J."/>
            <person name="Ivanova N."/>
            <person name="Dalin E."/>
            <person name="Martinez M."/>
            <person name="Lapidus A."/>
            <person name="Hauser L."/>
            <person name="Land M."/>
            <person name="Thomas T."/>
            <person name="Cavicchioli R."/>
        </authorList>
    </citation>
    <scope>NUCLEOTIDE SEQUENCE [LARGE SCALE GENOMIC DNA]</scope>
    <source>
        <strain>DSM 6242 / NBRC 107633 / OCM 468 / ACE-M</strain>
    </source>
</reference>
<comment type="function">
    <text evidence="1">Catalyzes the synthesis of beta-nicotinate D-ribonucleotide from nicotinate and 5-phospho-D-ribose 1-phosphate at the expense of ATP.</text>
</comment>
<comment type="catalytic activity">
    <reaction evidence="1">
        <text>nicotinate + 5-phospho-alpha-D-ribose 1-diphosphate + ATP + H2O = nicotinate beta-D-ribonucleotide + ADP + phosphate + diphosphate</text>
        <dbReference type="Rhea" id="RHEA:36163"/>
        <dbReference type="ChEBI" id="CHEBI:15377"/>
        <dbReference type="ChEBI" id="CHEBI:30616"/>
        <dbReference type="ChEBI" id="CHEBI:32544"/>
        <dbReference type="ChEBI" id="CHEBI:33019"/>
        <dbReference type="ChEBI" id="CHEBI:43474"/>
        <dbReference type="ChEBI" id="CHEBI:57502"/>
        <dbReference type="ChEBI" id="CHEBI:58017"/>
        <dbReference type="ChEBI" id="CHEBI:456216"/>
        <dbReference type="EC" id="6.3.4.21"/>
    </reaction>
</comment>
<comment type="pathway">
    <text evidence="1">Cofactor biosynthesis; NAD(+) biosynthesis; nicotinate D-ribonucleotide from nicotinate: step 1/1.</text>
</comment>
<comment type="PTM">
    <text evidence="1">Transiently phosphorylated on a His residue during the reaction cycle. Phosphorylation strongly increases the affinity for substrates and increases the rate of nicotinate D-ribonucleotide production. Dephosphorylation regenerates the low-affinity form of the enzyme, leading to product release.</text>
</comment>
<comment type="similarity">
    <text evidence="1">Belongs to the NAPRTase family.</text>
</comment>
<organism>
    <name type="scientific">Methanococcoides burtonii (strain DSM 6242 / NBRC 107633 / OCM 468 / ACE-M)</name>
    <dbReference type="NCBI Taxonomy" id="259564"/>
    <lineage>
        <taxon>Archaea</taxon>
        <taxon>Methanobacteriati</taxon>
        <taxon>Methanobacteriota</taxon>
        <taxon>Stenosarchaea group</taxon>
        <taxon>Methanomicrobia</taxon>
        <taxon>Methanosarcinales</taxon>
        <taxon>Methanosarcinaceae</taxon>
        <taxon>Methanococcoides</taxon>
    </lineage>
</organism>
<feature type="chain" id="PRO_1000146844" description="Nicotinate phosphoribosyltransferase">
    <location>
        <begin position="1"/>
        <end position="405"/>
    </location>
</feature>
<feature type="modified residue" description="Phosphohistidine; by autocatalysis" evidence="1">
    <location>
        <position position="224"/>
    </location>
</feature>
<proteinExistence type="inferred from homology"/>
<sequence>MIRSILDNDLYKFTMQMAVLELFPNARAEYRFINRGAQSFTNDFVNELRRIINKDISKIALSEDEYIWLKDNCPFFKPSYIEYLKNFRFNPEEVKIVLTEDNELELCIEGPWHSSILWEIVLMSTISELYFTVTDNKGEEISASNANDPENTLMEEYSSFIGDMGKELDAKGCIFSEFGTRRRRGFKLHDKVVEVLHELDSFSGTSNVYFAKKYGVRPIGTIGHEWIMGNSALVGLRNANKFAFDNWVKVYKGDLSIALSDTFGSKPFFQNFSIGLAKIYDGVRHDSGDPIKFADEVIEHYKKLGIDPMKKVLVFSDSLHVSDAVKLKEYCSGRINCSFGIGTTLTNNPDFFSYNPPLNMVIKLHKIDGIPVVKLSDSVEKATGDKDALRVANYIFGRKGLDEQF</sequence>
<accession>Q12Z05</accession>
<evidence type="ECO:0000255" key="1">
    <source>
        <dbReference type="HAMAP-Rule" id="MF_00570"/>
    </source>
</evidence>